<sequence length="68" mass="8269">MIFPIRCFSCGNVISEVYEEYRTRLKNGENPEEILNDLEIKKYCCRRMFASHRLDNDRELFDDIVEYK</sequence>
<comment type="function">
    <text evidence="1">DNA-dependent RNA polymerase (RNAP) catalyzes the transcription of DNA into RNA using the four ribonucleoside triphosphates as substrates.</text>
</comment>
<comment type="catalytic activity">
    <reaction evidence="1">
        <text>RNA(n) + a ribonucleoside 5'-triphosphate = RNA(n+1) + diphosphate</text>
        <dbReference type="Rhea" id="RHEA:21248"/>
        <dbReference type="Rhea" id="RHEA-COMP:14527"/>
        <dbReference type="Rhea" id="RHEA-COMP:17342"/>
        <dbReference type="ChEBI" id="CHEBI:33019"/>
        <dbReference type="ChEBI" id="CHEBI:61557"/>
        <dbReference type="ChEBI" id="CHEBI:140395"/>
        <dbReference type="EC" id="2.7.7.6"/>
    </reaction>
</comment>
<comment type="cofactor">
    <cofactor evidence="1">
        <name>Zn(2+)</name>
        <dbReference type="ChEBI" id="CHEBI:29105"/>
    </cofactor>
    <text evidence="1">Binds 1 zinc ion.</text>
</comment>
<comment type="subunit">
    <text evidence="1">Part of the RNA polymerase complex.</text>
</comment>
<comment type="subcellular location">
    <subcellularLocation>
        <location evidence="1">Cytoplasm</location>
    </subcellularLocation>
</comment>
<comment type="similarity">
    <text evidence="1">Belongs to the archaeal Rpo10/eukaryotic RPB10 RNA polymerase subunit family.</text>
</comment>
<gene>
    <name evidence="1" type="primary">rpo10</name>
    <name evidence="1" type="synonym">rpoN</name>
    <name type="ordered locus">MMP1326</name>
</gene>
<accession>Q6LXM4</accession>
<feature type="chain" id="PRO_0000121352" description="DNA-directed RNA polymerase subunit Rpo10">
    <location>
        <begin position="1"/>
        <end position="68"/>
    </location>
</feature>
<feature type="binding site" evidence="1">
    <location>
        <position position="7"/>
    </location>
    <ligand>
        <name>Zn(2+)</name>
        <dbReference type="ChEBI" id="CHEBI:29105"/>
    </ligand>
</feature>
<feature type="binding site" evidence="1">
    <location>
        <position position="10"/>
    </location>
    <ligand>
        <name>Zn(2+)</name>
        <dbReference type="ChEBI" id="CHEBI:29105"/>
    </ligand>
</feature>
<feature type="binding site" evidence="1">
    <location>
        <position position="44"/>
    </location>
    <ligand>
        <name>Zn(2+)</name>
        <dbReference type="ChEBI" id="CHEBI:29105"/>
    </ligand>
</feature>
<feature type="binding site" evidence="1">
    <location>
        <position position="45"/>
    </location>
    <ligand>
        <name>Zn(2+)</name>
        <dbReference type="ChEBI" id="CHEBI:29105"/>
    </ligand>
</feature>
<dbReference type="EC" id="2.7.7.6" evidence="1"/>
<dbReference type="EMBL" id="BX950229">
    <property type="protein sequence ID" value="CAF30882.1"/>
    <property type="molecule type" value="Genomic_DNA"/>
</dbReference>
<dbReference type="RefSeq" id="WP_011171270.1">
    <property type="nucleotide sequence ID" value="NC_005791.1"/>
</dbReference>
<dbReference type="SMR" id="Q6LXM4"/>
<dbReference type="STRING" id="267377.MMP1326"/>
<dbReference type="EnsemblBacteria" id="CAF30882">
    <property type="protein sequence ID" value="CAF30882"/>
    <property type="gene ID" value="MMP1326"/>
</dbReference>
<dbReference type="GeneID" id="37875917"/>
<dbReference type="KEGG" id="mmp:MMP1326"/>
<dbReference type="PATRIC" id="fig|267377.15.peg.1361"/>
<dbReference type="eggNOG" id="arCOG04244">
    <property type="taxonomic scope" value="Archaea"/>
</dbReference>
<dbReference type="HOGENOM" id="CLU_143122_2_1_2"/>
<dbReference type="OrthoDB" id="371754at2157"/>
<dbReference type="Proteomes" id="UP000000590">
    <property type="component" value="Chromosome"/>
</dbReference>
<dbReference type="GO" id="GO:0005737">
    <property type="term" value="C:cytoplasm"/>
    <property type="evidence" value="ECO:0007669"/>
    <property type="project" value="UniProtKB-SubCell"/>
</dbReference>
<dbReference type="GO" id="GO:0000428">
    <property type="term" value="C:DNA-directed RNA polymerase complex"/>
    <property type="evidence" value="ECO:0007669"/>
    <property type="project" value="UniProtKB-KW"/>
</dbReference>
<dbReference type="GO" id="GO:0003677">
    <property type="term" value="F:DNA binding"/>
    <property type="evidence" value="ECO:0007669"/>
    <property type="project" value="InterPro"/>
</dbReference>
<dbReference type="GO" id="GO:0003899">
    <property type="term" value="F:DNA-directed RNA polymerase activity"/>
    <property type="evidence" value="ECO:0007669"/>
    <property type="project" value="UniProtKB-UniRule"/>
</dbReference>
<dbReference type="GO" id="GO:0008270">
    <property type="term" value="F:zinc ion binding"/>
    <property type="evidence" value="ECO:0007669"/>
    <property type="project" value="UniProtKB-UniRule"/>
</dbReference>
<dbReference type="GO" id="GO:0006351">
    <property type="term" value="P:DNA-templated transcription"/>
    <property type="evidence" value="ECO:0007669"/>
    <property type="project" value="UniProtKB-UniRule"/>
</dbReference>
<dbReference type="Gene3D" id="1.10.10.60">
    <property type="entry name" value="Homeodomain-like"/>
    <property type="match status" value="1"/>
</dbReference>
<dbReference type="HAMAP" id="MF_00250">
    <property type="entry name" value="RNApol_arch_Rpo10"/>
    <property type="match status" value="1"/>
</dbReference>
<dbReference type="InterPro" id="IPR023580">
    <property type="entry name" value="RNA_pol_su_RPB10"/>
</dbReference>
<dbReference type="InterPro" id="IPR020789">
    <property type="entry name" value="RNA_pol_suN_Zn-BS"/>
</dbReference>
<dbReference type="InterPro" id="IPR000268">
    <property type="entry name" value="RPABC5/Rpb10"/>
</dbReference>
<dbReference type="NCBIfam" id="NF003089">
    <property type="entry name" value="PRK04016.1"/>
    <property type="match status" value="1"/>
</dbReference>
<dbReference type="PANTHER" id="PTHR23431:SF3">
    <property type="entry name" value="DNA-DIRECTED RNA POLYMERASES I, II, AND III SUBUNIT RPABC5"/>
    <property type="match status" value="1"/>
</dbReference>
<dbReference type="PANTHER" id="PTHR23431">
    <property type="entry name" value="DNA-DIRECTED RNA POLYMERASES I, II, AND III SUBUNIT RPABC5 FAMILY MEMBER"/>
    <property type="match status" value="1"/>
</dbReference>
<dbReference type="Pfam" id="PF01194">
    <property type="entry name" value="RNA_pol_N"/>
    <property type="match status" value="1"/>
</dbReference>
<dbReference type="PIRSF" id="PIRSF005653">
    <property type="entry name" value="RNA_pol_N/8_sub"/>
    <property type="match status" value="1"/>
</dbReference>
<dbReference type="SUPFAM" id="SSF46924">
    <property type="entry name" value="RNA polymerase subunit RPB10"/>
    <property type="match status" value="1"/>
</dbReference>
<dbReference type="PROSITE" id="PS01112">
    <property type="entry name" value="RNA_POL_N_8KD"/>
    <property type="match status" value="1"/>
</dbReference>
<organism>
    <name type="scientific">Methanococcus maripaludis (strain DSM 14266 / JCM 13030 / NBRC 101832 / S2 / LL)</name>
    <dbReference type="NCBI Taxonomy" id="267377"/>
    <lineage>
        <taxon>Archaea</taxon>
        <taxon>Methanobacteriati</taxon>
        <taxon>Methanobacteriota</taxon>
        <taxon>Methanomada group</taxon>
        <taxon>Methanococci</taxon>
        <taxon>Methanococcales</taxon>
        <taxon>Methanococcaceae</taxon>
        <taxon>Methanococcus</taxon>
    </lineage>
</organism>
<evidence type="ECO:0000255" key="1">
    <source>
        <dbReference type="HAMAP-Rule" id="MF_00250"/>
    </source>
</evidence>
<name>RPO10_METMP</name>
<reference key="1">
    <citation type="journal article" date="2004" name="J. Bacteriol.">
        <title>Complete genome sequence of the genetically tractable hydrogenotrophic methanogen Methanococcus maripaludis.</title>
        <authorList>
            <person name="Hendrickson E.L."/>
            <person name="Kaul R."/>
            <person name="Zhou Y."/>
            <person name="Bovee D."/>
            <person name="Chapman P."/>
            <person name="Chung J."/>
            <person name="Conway de Macario E."/>
            <person name="Dodsworth J.A."/>
            <person name="Gillett W."/>
            <person name="Graham D.E."/>
            <person name="Hackett M."/>
            <person name="Haydock A.K."/>
            <person name="Kang A."/>
            <person name="Land M.L."/>
            <person name="Levy R."/>
            <person name="Lie T.J."/>
            <person name="Major T.A."/>
            <person name="Moore B.C."/>
            <person name="Porat I."/>
            <person name="Palmeiri A."/>
            <person name="Rouse G."/>
            <person name="Saenphimmachak C."/>
            <person name="Soell D."/>
            <person name="Van Dien S."/>
            <person name="Wang T."/>
            <person name="Whitman W.B."/>
            <person name="Xia Q."/>
            <person name="Zhang Y."/>
            <person name="Larimer F.W."/>
            <person name="Olson M.V."/>
            <person name="Leigh J.A."/>
        </authorList>
    </citation>
    <scope>NUCLEOTIDE SEQUENCE [LARGE SCALE GENOMIC DNA]</scope>
    <source>
        <strain>DSM 14266 / JCM 13030 / NBRC 101832 / S2 / LL</strain>
    </source>
</reference>
<protein>
    <recommendedName>
        <fullName evidence="1">DNA-directed RNA polymerase subunit Rpo10</fullName>
        <ecNumber evidence="1">2.7.7.6</ecNumber>
    </recommendedName>
    <alternativeName>
        <fullName evidence="1">DNA-directed RNA polymerase subunit N</fullName>
    </alternativeName>
</protein>
<keyword id="KW-0963">Cytoplasm</keyword>
<keyword id="KW-0240">DNA-directed RNA polymerase</keyword>
<keyword id="KW-0479">Metal-binding</keyword>
<keyword id="KW-0548">Nucleotidyltransferase</keyword>
<keyword id="KW-1185">Reference proteome</keyword>
<keyword id="KW-0804">Transcription</keyword>
<keyword id="KW-0808">Transferase</keyword>
<keyword id="KW-0862">Zinc</keyword>
<proteinExistence type="inferred from homology"/>